<organism>
    <name type="scientific">Streptococcus pneumoniae (strain ATCC 700669 / Spain 23F-1)</name>
    <dbReference type="NCBI Taxonomy" id="561276"/>
    <lineage>
        <taxon>Bacteria</taxon>
        <taxon>Bacillati</taxon>
        <taxon>Bacillota</taxon>
        <taxon>Bacilli</taxon>
        <taxon>Lactobacillales</taxon>
        <taxon>Streptococcaceae</taxon>
        <taxon>Streptococcus</taxon>
    </lineage>
</organism>
<keyword id="KW-0963">Cytoplasm</keyword>
<keyword id="KW-0251">Elongation factor</keyword>
<keyword id="KW-0342">GTP-binding</keyword>
<keyword id="KW-0547">Nucleotide-binding</keyword>
<keyword id="KW-0648">Protein biosynthesis</keyword>
<proteinExistence type="inferred from homology"/>
<reference key="1">
    <citation type="journal article" date="2009" name="J. Bacteriol.">
        <title>Role of conjugative elements in the evolution of the multidrug-resistant pandemic clone Streptococcus pneumoniae Spain23F ST81.</title>
        <authorList>
            <person name="Croucher N.J."/>
            <person name="Walker D."/>
            <person name="Romero P."/>
            <person name="Lennard N."/>
            <person name="Paterson G.K."/>
            <person name="Bason N.C."/>
            <person name="Mitchell A.M."/>
            <person name="Quail M.A."/>
            <person name="Andrew P.W."/>
            <person name="Parkhill J."/>
            <person name="Bentley S.D."/>
            <person name="Mitchell T.J."/>
        </authorList>
    </citation>
    <scope>NUCLEOTIDE SEQUENCE [LARGE SCALE GENOMIC DNA]</scope>
    <source>
        <strain>ATCC 700669 / Spain 23F-1</strain>
    </source>
</reference>
<comment type="function">
    <text evidence="1">Catalyzes the GTP-dependent ribosomal translocation step during translation elongation. During this step, the ribosome changes from the pre-translocational (PRE) to the post-translocational (POST) state as the newly formed A-site-bound peptidyl-tRNA and P-site-bound deacylated tRNA move to the P and E sites, respectively. Catalyzes the coordinated movement of the two tRNA molecules, the mRNA and conformational changes in the ribosome.</text>
</comment>
<comment type="subcellular location">
    <subcellularLocation>
        <location evidence="1">Cytoplasm</location>
    </subcellularLocation>
</comment>
<comment type="similarity">
    <text evidence="1">Belongs to the TRAFAC class translation factor GTPase superfamily. Classic translation factor GTPase family. EF-G/EF-2 subfamily.</text>
</comment>
<accession>B8ZKU0</accession>
<feature type="chain" id="PRO_1000201489" description="Elongation factor G">
    <location>
        <begin position="1"/>
        <end position="693"/>
    </location>
</feature>
<feature type="domain" description="tr-type G">
    <location>
        <begin position="8"/>
        <end position="282"/>
    </location>
</feature>
<feature type="binding site" evidence="1">
    <location>
        <begin position="17"/>
        <end position="24"/>
    </location>
    <ligand>
        <name>GTP</name>
        <dbReference type="ChEBI" id="CHEBI:37565"/>
    </ligand>
</feature>
<feature type="binding site" evidence="1">
    <location>
        <begin position="81"/>
        <end position="85"/>
    </location>
    <ligand>
        <name>GTP</name>
        <dbReference type="ChEBI" id="CHEBI:37565"/>
    </ligand>
</feature>
<feature type="binding site" evidence="1">
    <location>
        <begin position="135"/>
        <end position="138"/>
    </location>
    <ligand>
        <name>GTP</name>
        <dbReference type="ChEBI" id="CHEBI:37565"/>
    </ligand>
</feature>
<protein>
    <recommendedName>
        <fullName evidence="1">Elongation factor G</fullName>
        <shortName evidence="1">EF-G</shortName>
    </recommendedName>
</protein>
<evidence type="ECO:0000255" key="1">
    <source>
        <dbReference type="HAMAP-Rule" id="MF_00054"/>
    </source>
</evidence>
<name>EFG_STRPJ</name>
<gene>
    <name evidence="1" type="primary">fusA</name>
    <name type="ordered locus">SPN23F02590</name>
</gene>
<sequence length="693" mass="76847">MAREFSLEKTRNIGIMAHVDAGKTTTTERILYYTGKIHKIGETHEGASQMDWMEQEQERGITITSAATTAQWNNHRVNIIDTPGHVDFTIEVQRSLRVLDGAVTVLDSQSGVEPQTETVWRQATEYGVPRIVFANKMDKIGADFLYSVSTLHDRLQANAHPIQLPIGSEDDFRGIIDLIKMKAEIYTNDLGTDILEEDIPAEYLDQAQEYREKLVEAVAETDEELMMKYLEGEEITNEELKAGIRKATINVEFFPVLCGSAFKNKGVQLMLDAVIDYLPSPLDIPAIKGINPDTDEEETRPASDEEPFAALAFKIMTDPFVGRLTFFRVYSGVLQSGSYVLNTSKGKRERIGRILQMHANSRQEIDTVYSGDIAAAVGLKDTTTGDSLTDEKAKIILESINVPEPVIQLMVEPKSKADQDKMGIALQKLAEEDPTFRVETNVETGETVISGMGELHLDVLVDRMRREFKVEANVGAPQVSYRETFRASTQARGFFKRQSGGKGQFGDVWIEFTPNEEGKGFEFENAIVGGVVPREFIPAVEKGLVESMANGVLAGYPMVDVKAKLYDGSYHDVDSSETAFKIAASLALKEAAKSAQPAILEPMMLVTITVPEENLGDVMGHVTARRGRVDGMEAHGNSQIVRAYVPLAEMFGYATVLRSASQGRGTFMMVFDHYEDVPKSVQEEIIKKNKGED</sequence>
<dbReference type="EMBL" id="FM211187">
    <property type="protein sequence ID" value="CAR68119.1"/>
    <property type="molecule type" value="Genomic_DNA"/>
</dbReference>
<dbReference type="RefSeq" id="WP_000090357.1">
    <property type="nucleotide sequence ID" value="NC_011900.1"/>
</dbReference>
<dbReference type="SMR" id="B8ZKU0"/>
<dbReference type="KEGG" id="sne:SPN23F02590"/>
<dbReference type="HOGENOM" id="CLU_002794_4_1_9"/>
<dbReference type="GO" id="GO:0005737">
    <property type="term" value="C:cytoplasm"/>
    <property type="evidence" value="ECO:0007669"/>
    <property type="project" value="UniProtKB-SubCell"/>
</dbReference>
<dbReference type="GO" id="GO:0005525">
    <property type="term" value="F:GTP binding"/>
    <property type="evidence" value="ECO:0007669"/>
    <property type="project" value="UniProtKB-UniRule"/>
</dbReference>
<dbReference type="GO" id="GO:0003924">
    <property type="term" value="F:GTPase activity"/>
    <property type="evidence" value="ECO:0007669"/>
    <property type="project" value="InterPro"/>
</dbReference>
<dbReference type="GO" id="GO:0003746">
    <property type="term" value="F:translation elongation factor activity"/>
    <property type="evidence" value="ECO:0007669"/>
    <property type="project" value="UniProtKB-UniRule"/>
</dbReference>
<dbReference type="GO" id="GO:0032790">
    <property type="term" value="P:ribosome disassembly"/>
    <property type="evidence" value="ECO:0007669"/>
    <property type="project" value="TreeGrafter"/>
</dbReference>
<dbReference type="CDD" id="cd01886">
    <property type="entry name" value="EF-G"/>
    <property type="match status" value="1"/>
</dbReference>
<dbReference type="CDD" id="cd16262">
    <property type="entry name" value="EFG_III"/>
    <property type="match status" value="1"/>
</dbReference>
<dbReference type="CDD" id="cd01434">
    <property type="entry name" value="EFG_mtEFG1_IV"/>
    <property type="match status" value="1"/>
</dbReference>
<dbReference type="CDD" id="cd03713">
    <property type="entry name" value="EFG_mtEFG_C"/>
    <property type="match status" value="1"/>
</dbReference>
<dbReference type="CDD" id="cd04088">
    <property type="entry name" value="EFG_mtEFG_II"/>
    <property type="match status" value="1"/>
</dbReference>
<dbReference type="FunFam" id="2.40.30.10:FF:000006">
    <property type="entry name" value="Elongation factor G"/>
    <property type="match status" value="1"/>
</dbReference>
<dbReference type="FunFam" id="3.30.230.10:FF:000003">
    <property type="entry name" value="Elongation factor G"/>
    <property type="match status" value="1"/>
</dbReference>
<dbReference type="FunFam" id="3.30.70.240:FF:000001">
    <property type="entry name" value="Elongation factor G"/>
    <property type="match status" value="1"/>
</dbReference>
<dbReference type="FunFam" id="3.30.70.870:FF:000001">
    <property type="entry name" value="Elongation factor G"/>
    <property type="match status" value="1"/>
</dbReference>
<dbReference type="FunFam" id="3.40.50.300:FF:000029">
    <property type="entry name" value="Elongation factor G"/>
    <property type="match status" value="1"/>
</dbReference>
<dbReference type="Gene3D" id="3.30.230.10">
    <property type="match status" value="1"/>
</dbReference>
<dbReference type="Gene3D" id="3.30.70.240">
    <property type="match status" value="1"/>
</dbReference>
<dbReference type="Gene3D" id="3.30.70.870">
    <property type="entry name" value="Elongation Factor G (Translational Gtpase), domain 3"/>
    <property type="match status" value="1"/>
</dbReference>
<dbReference type="Gene3D" id="3.40.50.300">
    <property type="entry name" value="P-loop containing nucleotide triphosphate hydrolases"/>
    <property type="match status" value="1"/>
</dbReference>
<dbReference type="Gene3D" id="2.40.30.10">
    <property type="entry name" value="Translation factors"/>
    <property type="match status" value="1"/>
</dbReference>
<dbReference type="HAMAP" id="MF_00054_B">
    <property type="entry name" value="EF_G_EF_2_B"/>
    <property type="match status" value="1"/>
</dbReference>
<dbReference type="InterPro" id="IPR053905">
    <property type="entry name" value="EF-G-like_DII"/>
</dbReference>
<dbReference type="InterPro" id="IPR041095">
    <property type="entry name" value="EFG_II"/>
</dbReference>
<dbReference type="InterPro" id="IPR009022">
    <property type="entry name" value="EFG_III"/>
</dbReference>
<dbReference type="InterPro" id="IPR035647">
    <property type="entry name" value="EFG_III/V"/>
</dbReference>
<dbReference type="InterPro" id="IPR047872">
    <property type="entry name" value="EFG_IV"/>
</dbReference>
<dbReference type="InterPro" id="IPR035649">
    <property type="entry name" value="EFG_V"/>
</dbReference>
<dbReference type="InterPro" id="IPR000640">
    <property type="entry name" value="EFG_V-like"/>
</dbReference>
<dbReference type="InterPro" id="IPR031157">
    <property type="entry name" value="G_TR_CS"/>
</dbReference>
<dbReference type="InterPro" id="IPR027417">
    <property type="entry name" value="P-loop_NTPase"/>
</dbReference>
<dbReference type="InterPro" id="IPR020568">
    <property type="entry name" value="Ribosomal_Su5_D2-typ_SF"/>
</dbReference>
<dbReference type="InterPro" id="IPR014721">
    <property type="entry name" value="Ribsml_uS5_D2-typ_fold_subgr"/>
</dbReference>
<dbReference type="InterPro" id="IPR005225">
    <property type="entry name" value="Small_GTP-bd"/>
</dbReference>
<dbReference type="InterPro" id="IPR000795">
    <property type="entry name" value="T_Tr_GTP-bd_dom"/>
</dbReference>
<dbReference type="InterPro" id="IPR009000">
    <property type="entry name" value="Transl_B-barrel_sf"/>
</dbReference>
<dbReference type="InterPro" id="IPR004540">
    <property type="entry name" value="Transl_elong_EFG/EF2"/>
</dbReference>
<dbReference type="InterPro" id="IPR005517">
    <property type="entry name" value="Transl_elong_EFG/EF2_IV"/>
</dbReference>
<dbReference type="NCBIfam" id="TIGR00484">
    <property type="entry name" value="EF-G"/>
    <property type="match status" value="1"/>
</dbReference>
<dbReference type="NCBIfam" id="NF009379">
    <property type="entry name" value="PRK12740.1-3"/>
    <property type="match status" value="1"/>
</dbReference>
<dbReference type="NCBIfam" id="NF009381">
    <property type="entry name" value="PRK12740.1-5"/>
    <property type="match status" value="1"/>
</dbReference>
<dbReference type="NCBIfam" id="TIGR00231">
    <property type="entry name" value="small_GTP"/>
    <property type="match status" value="1"/>
</dbReference>
<dbReference type="PANTHER" id="PTHR43261:SF1">
    <property type="entry name" value="RIBOSOME-RELEASING FACTOR 2, MITOCHONDRIAL"/>
    <property type="match status" value="1"/>
</dbReference>
<dbReference type="PANTHER" id="PTHR43261">
    <property type="entry name" value="TRANSLATION ELONGATION FACTOR G-RELATED"/>
    <property type="match status" value="1"/>
</dbReference>
<dbReference type="Pfam" id="PF22042">
    <property type="entry name" value="EF-G_D2"/>
    <property type="match status" value="1"/>
</dbReference>
<dbReference type="Pfam" id="PF00679">
    <property type="entry name" value="EFG_C"/>
    <property type="match status" value="1"/>
</dbReference>
<dbReference type="Pfam" id="PF14492">
    <property type="entry name" value="EFG_III"/>
    <property type="match status" value="1"/>
</dbReference>
<dbReference type="Pfam" id="PF03764">
    <property type="entry name" value="EFG_IV"/>
    <property type="match status" value="1"/>
</dbReference>
<dbReference type="Pfam" id="PF00009">
    <property type="entry name" value="GTP_EFTU"/>
    <property type="match status" value="1"/>
</dbReference>
<dbReference type="PRINTS" id="PR00315">
    <property type="entry name" value="ELONGATNFCT"/>
</dbReference>
<dbReference type="SMART" id="SM00838">
    <property type="entry name" value="EFG_C"/>
    <property type="match status" value="1"/>
</dbReference>
<dbReference type="SMART" id="SM00889">
    <property type="entry name" value="EFG_IV"/>
    <property type="match status" value="1"/>
</dbReference>
<dbReference type="SUPFAM" id="SSF54980">
    <property type="entry name" value="EF-G C-terminal domain-like"/>
    <property type="match status" value="2"/>
</dbReference>
<dbReference type="SUPFAM" id="SSF52540">
    <property type="entry name" value="P-loop containing nucleoside triphosphate hydrolases"/>
    <property type="match status" value="1"/>
</dbReference>
<dbReference type="SUPFAM" id="SSF54211">
    <property type="entry name" value="Ribosomal protein S5 domain 2-like"/>
    <property type="match status" value="1"/>
</dbReference>
<dbReference type="SUPFAM" id="SSF50447">
    <property type="entry name" value="Translation proteins"/>
    <property type="match status" value="1"/>
</dbReference>
<dbReference type="PROSITE" id="PS00301">
    <property type="entry name" value="G_TR_1"/>
    <property type="match status" value="1"/>
</dbReference>
<dbReference type="PROSITE" id="PS51722">
    <property type="entry name" value="G_TR_2"/>
    <property type="match status" value="1"/>
</dbReference>